<reference key="1">
    <citation type="journal article" date="2011" name="J. Bacteriol.">
        <title>Comparative genomics of 28 Salmonella enterica isolates: evidence for CRISPR-mediated adaptive sublineage evolution.</title>
        <authorList>
            <person name="Fricke W.F."/>
            <person name="Mammel M.K."/>
            <person name="McDermott P.F."/>
            <person name="Tartera C."/>
            <person name="White D.G."/>
            <person name="Leclerc J.E."/>
            <person name="Ravel J."/>
            <person name="Cebula T.A."/>
        </authorList>
    </citation>
    <scope>NUCLEOTIDE SEQUENCE [LARGE SCALE GENOMIC DNA]</scope>
    <source>
        <strain>CT_02021853</strain>
    </source>
</reference>
<keyword id="KW-0067">ATP-binding</keyword>
<keyword id="KW-0143">Chaperone</keyword>
<keyword id="KW-0963">Cytoplasm</keyword>
<keyword id="KW-0547">Nucleotide-binding</keyword>
<keyword id="KW-0346">Stress response</keyword>
<sequence>MSEMTPREIVSELNKHIIGQDNAKRSVAIALRNRWRRMQLDEELRHEVTPKNILMIGPTGVGKTEIARRLAKLANAPFIKVEATKFTEVGYVGKEVDSIIRDLTDAAVKMVRVQAIEKNRYRAEELAEERILDVLIPPAKNNWGQAEQQQEPSAARQTFRKKLREGQLDDKEIEINLAAAPMGVEIMAPPGMEEMTSQLQSMFQNLGGQKQKPRKLKIKDAMKLLVEEEAAKLVNPEELKQDAIDAVEQHGIVFIDEIDKICKRGETSGPDVSREGVQRDLLPLVEGCTVSTKHGMVKTDHILFIASGAFQVAKPSDLIPELQGRLPIRVELQALTTSDFERILTEPNASVTVQYKALMATEGVNIEFTDSGIKRIAEAAWQVNETTENIGARRLHTVLERLMEEISYNASDLHGQNITIDAEYVSKHLDALVADEDLSRFIL</sequence>
<gene>
    <name evidence="1" type="primary">hslU</name>
    <name type="ordered locus">SeD_A4491</name>
</gene>
<accession>B5FPU0</accession>
<comment type="function">
    <text evidence="1">ATPase subunit of a proteasome-like degradation complex; this subunit has chaperone activity. The binding of ATP and its subsequent hydrolysis by HslU are essential for unfolding of protein substrates subsequently hydrolyzed by HslV. HslU recognizes the N-terminal part of its protein substrates and unfolds these before they are guided to HslV for hydrolysis.</text>
</comment>
<comment type="subunit">
    <text evidence="1">A double ring-shaped homohexamer of HslV is capped on each side by a ring-shaped HslU homohexamer. The assembly of the HslU/HslV complex is dependent on binding of ATP.</text>
</comment>
<comment type="subcellular location">
    <subcellularLocation>
        <location evidence="1">Cytoplasm</location>
    </subcellularLocation>
</comment>
<comment type="induction">
    <text evidence="1">By heat shock.</text>
</comment>
<comment type="similarity">
    <text evidence="1">Belongs to the ClpX chaperone family. HslU subfamily.</text>
</comment>
<evidence type="ECO:0000255" key="1">
    <source>
        <dbReference type="HAMAP-Rule" id="MF_00249"/>
    </source>
</evidence>
<name>HSLU_SALDC</name>
<feature type="chain" id="PRO_1000100969" description="ATP-dependent protease ATPase subunit HslU">
    <location>
        <begin position="1"/>
        <end position="443"/>
    </location>
</feature>
<feature type="binding site" evidence="1">
    <location>
        <position position="18"/>
    </location>
    <ligand>
        <name>ATP</name>
        <dbReference type="ChEBI" id="CHEBI:30616"/>
    </ligand>
</feature>
<feature type="binding site" evidence="1">
    <location>
        <begin position="60"/>
        <end position="65"/>
    </location>
    <ligand>
        <name>ATP</name>
        <dbReference type="ChEBI" id="CHEBI:30616"/>
    </ligand>
</feature>
<feature type="binding site" evidence="1">
    <location>
        <position position="256"/>
    </location>
    <ligand>
        <name>ATP</name>
        <dbReference type="ChEBI" id="CHEBI:30616"/>
    </ligand>
</feature>
<feature type="binding site" evidence="1">
    <location>
        <position position="321"/>
    </location>
    <ligand>
        <name>ATP</name>
        <dbReference type="ChEBI" id="CHEBI:30616"/>
    </ligand>
</feature>
<feature type="binding site" evidence="1">
    <location>
        <position position="393"/>
    </location>
    <ligand>
        <name>ATP</name>
        <dbReference type="ChEBI" id="CHEBI:30616"/>
    </ligand>
</feature>
<organism>
    <name type="scientific">Salmonella dublin (strain CT_02021853)</name>
    <dbReference type="NCBI Taxonomy" id="439851"/>
    <lineage>
        <taxon>Bacteria</taxon>
        <taxon>Pseudomonadati</taxon>
        <taxon>Pseudomonadota</taxon>
        <taxon>Gammaproteobacteria</taxon>
        <taxon>Enterobacterales</taxon>
        <taxon>Enterobacteriaceae</taxon>
        <taxon>Salmonella</taxon>
    </lineage>
</organism>
<proteinExistence type="inferred from homology"/>
<dbReference type="EMBL" id="CP001144">
    <property type="protein sequence ID" value="ACH73886.1"/>
    <property type="molecule type" value="Genomic_DNA"/>
</dbReference>
<dbReference type="RefSeq" id="WP_001293360.1">
    <property type="nucleotide sequence ID" value="NC_011205.1"/>
</dbReference>
<dbReference type="SMR" id="B5FPU0"/>
<dbReference type="KEGG" id="sed:SeD_A4491"/>
<dbReference type="HOGENOM" id="CLU_033123_0_0_6"/>
<dbReference type="Proteomes" id="UP000008322">
    <property type="component" value="Chromosome"/>
</dbReference>
<dbReference type="GO" id="GO:0009376">
    <property type="term" value="C:HslUV protease complex"/>
    <property type="evidence" value="ECO:0007669"/>
    <property type="project" value="UniProtKB-UniRule"/>
</dbReference>
<dbReference type="GO" id="GO:0005524">
    <property type="term" value="F:ATP binding"/>
    <property type="evidence" value="ECO:0007669"/>
    <property type="project" value="UniProtKB-UniRule"/>
</dbReference>
<dbReference type="GO" id="GO:0016887">
    <property type="term" value="F:ATP hydrolysis activity"/>
    <property type="evidence" value="ECO:0007669"/>
    <property type="project" value="InterPro"/>
</dbReference>
<dbReference type="GO" id="GO:0008233">
    <property type="term" value="F:peptidase activity"/>
    <property type="evidence" value="ECO:0007669"/>
    <property type="project" value="InterPro"/>
</dbReference>
<dbReference type="GO" id="GO:0036402">
    <property type="term" value="F:proteasome-activating activity"/>
    <property type="evidence" value="ECO:0007669"/>
    <property type="project" value="UniProtKB-UniRule"/>
</dbReference>
<dbReference type="GO" id="GO:0043335">
    <property type="term" value="P:protein unfolding"/>
    <property type="evidence" value="ECO:0007669"/>
    <property type="project" value="UniProtKB-UniRule"/>
</dbReference>
<dbReference type="GO" id="GO:0051603">
    <property type="term" value="P:proteolysis involved in protein catabolic process"/>
    <property type="evidence" value="ECO:0007669"/>
    <property type="project" value="TreeGrafter"/>
</dbReference>
<dbReference type="CDD" id="cd19498">
    <property type="entry name" value="RecA-like_HslU"/>
    <property type="match status" value="1"/>
</dbReference>
<dbReference type="FunFam" id="1.10.8.10:FF:000012">
    <property type="entry name" value="ATP-dependent protease ATPase subunit HslU"/>
    <property type="match status" value="1"/>
</dbReference>
<dbReference type="FunFam" id="1.10.8.10:FF:000028">
    <property type="entry name" value="ATP-dependent protease ATPase subunit HslU"/>
    <property type="match status" value="1"/>
</dbReference>
<dbReference type="FunFam" id="1.10.8.60:FF:000027">
    <property type="entry name" value="ATP-dependent protease ATPase subunit HslU"/>
    <property type="match status" value="1"/>
</dbReference>
<dbReference type="FunFam" id="3.40.50.300:FF:000213">
    <property type="entry name" value="ATP-dependent protease ATPase subunit HslU"/>
    <property type="match status" value="1"/>
</dbReference>
<dbReference type="FunFam" id="3.40.50.300:FF:000220">
    <property type="entry name" value="ATP-dependent protease ATPase subunit HslU"/>
    <property type="match status" value="1"/>
</dbReference>
<dbReference type="Gene3D" id="1.10.8.60">
    <property type="match status" value="1"/>
</dbReference>
<dbReference type="Gene3D" id="1.10.8.10">
    <property type="entry name" value="DNA helicase RuvA subunit, C-terminal domain"/>
    <property type="match status" value="2"/>
</dbReference>
<dbReference type="Gene3D" id="3.40.50.300">
    <property type="entry name" value="P-loop containing nucleotide triphosphate hydrolases"/>
    <property type="match status" value="1"/>
</dbReference>
<dbReference type="HAMAP" id="MF_00249">
    <property type="entry name" value="HslU"/>
    <property type="match status" value="1"/>
</dbReference>
<dbReference type="InterPro" id="IPR003593">
    <property type="entry name" value="AAA+_ATPase"/>
</dbReference>
<dbReference type="InterPro" id="IPR050052">
    <property type="entry name" value="ATP-dep_Clp_protease_ClpX"/>
</dbReference>
<dbReference type="InterPro" id="IPR003959">
    <property type="entry name" value="ATPase_AAA_core"/>
</dbReference>
<dbReference type="InterPro" id="IPR019489">
    <property type="entry name" value="Clp_ATPase_C"/>
</dbReference>
<dbReference type="InterPro" id="IPR004491">
    <property type="entry name" value="HslU"/>
</dbReference>
<dbReference type="InterPro" id="IPR027417">
    <property type="entry name" value="P-loop_NTPase"/>
</dbReference>
<dbReference type="NCBIfam" id="TIGR00390">
    <property type="entry name" value="hslU"/>
    <property type="match status" value="1"/>
</dbReference>
<dbReference type="NCBIfam" id="NF003544">
    <property type="entry name" value="PRK05201.1"/>
    <property type="match status" value="1"/>
</dbReference>
<dbReference type="PANTHER" id="PTHR48102">
    <property type="entry name" value="ATP-DEPENDENT CLP PROTEASE ATP-BINDING SUBUNIT CLPX-LIKE, MITOCHONDRIAL-RELATED"/>
    <property type="match status" value="1"/>
</dbReference>
<dbReference type="PANTHER" id="PTHR48102:SF3">
    <property type="entry name" value="ATP-DEPENDENT PROTEASE ATPASE SUBUNIT HSLU"/>
    <property type="match status" value="1"/>
</dbReference>
<dbReference type="Pfam" id="PF00004">
    <property type="entry name" value="AAA"/>
    <property type="match status" value="1"/>
</dbReference>
<dbReference type="Pfam" id="PF07724">
    <property type="entry name" value="AAA_2"/>
    <property type="match status" value="1"/>
</dbReference>
<dbReference type="SMART" id="SM00382">
    <property type="entry name" value="AAA"/>
    <property type="match status" value="1"/>
</dbReference>
<dbReference type="SMART" id="SM01086">
    <property type="entry name" value="ClpB_D2-small"/>
    <property type="match status" value="1"/>
</dbReference>
<dbReference type="SUPFAM" id="SSF52540">
    <property type="entry name" value="P-loop containing nucleoside triphosphate hydrolases"/>
    <property type="match status" value="1"/>
</dbReference>
<protein>
    <recommendedName>
        <fullName evidence="1">ATP-dependent protease ATPase subunit HslU</fullName>
    </recommendedName>
    <alternativeName>
        <fullName evidence="1">Heat shock protein HslU</fullName>
    </alternativeName>
    <alternativeName>
        <fullName evidence="1">Unfoldase HslU</fullName>
    </alternativeName>
</protein>